<comment type="function">
    <text evidence="1">Catalyzes the ATP-dependent conversion of 7-carboxy-7-deazaguanine (CDG) to 7-cyano-7-deazaguanine (preQ(0)).</text>
</comment>
<comment type="catalytic activity">
    <reaction evidence="1">
        <text>7-carboxy-7-deazaguanine + NH4(+) + ATP = 7-cyano-7-deazaguanine + ADP + phosphate + H2O + H(+)</text>
        <dbReference type="Rhea" id="RHEA:27982"/>
        <dbReference type="ChEBI" id="CHEBI:15377"/>
        <dbReference type="ChEBI" id="CHEBI:15378"/>
        <dbReference type="ChEBI" id="CHEBI:28938"/>
        <dbReference type="ChEBI" id="CHEBI:30616"/>
        <dbReference type="ChEBI" id="CHEBI:43474"/>
        <dbReference type="ChEBI" id="CHEBI:45075"/>
        <dbReference type="ChEBI" id="CHEBI:61036"/>
        <dbReference type="ChEBI" id="CHEBI:456216"/>
        <dbReference type="EC" id="6.3.4.20"/>
    </reaction>
</comment>
<comment type="cofactor">
    <cofactor evidence="1">
        <name>Zn(2+)</name>
        <dbReference type="ChEBI" id="CHEBI:29105"/>
    </cofactor>
    <text evidence="1">Binds 1 zinc ion per subunit.</text>
</comment>
<comment type="pathway">
    <text evidence="1">Purine metabolism; 7-cyano-7-deazaguanine biosynthesis.</text>
</comment>
<comment type="similarity">
    <text evidence="1">Belongs to the QueC family.</text>
</comment>
<dbReference type="EC" id="6.3.4.20" evidence="1"/>
<dbReference type="EMBL" id="AE005673">
    <property type="protein sequence ID" value="AAK25122.1"/>
    <property type="molecule type" value="Genomic_DNA"/>
</dbReference>
<dbReference type="PIR" id="F87640">
    <property type="entry name" value="F87640"/>
</dbReference>
<dbReference type="RefSeq" id="NP_421954.1">
    <property type="nucleotide sequence ID" value="NC_002696.2"/>
</dbReference>
<dbReference type="RefSeq" id="WP_010920996.1">
    <property type="nucleotide sequence ID" value="NC_002696.2"/>
</dbReference>
<dbReference type="SMR" id="Q9A3P2"/>
<dbReference type="STRING" id="190650.CC_3160"/>
<dbReference type="EnsemblBacteria" id="AAK25122">
    <property type="protein sequence ID" value="AAK25122"/>
    <property type="gene ID" value="CC_3160"/>
</dbReference>
<dbReference type="KEGG" id="ccr:CC_3160"/>
<dbReference type="PATRIC" id="fig|190650.5.peg.3169"/>
<dbReference type="eggNOG" id="COG0603">
    <property type="taxonomic scope" value="Bacteria"/>
</dbReference>
<dbReference type="HOGENOM" id="CLU_081854_0_0_5"/>
<dbReference type="BioCyc" id="CAULO:CC3160-MONOMER"/>
<dbReference type="UniPathway" id="UPA00391"/>
<dbReference type="Proteomes" id="UP000001816">
    <property type="component" value="Chromosome"/>
</dbReference>
<dbReference type="GO" id="GO:0005524">
    <property type="term" value="F:ATP binding"/>
    <property type="evidence" value="ECO:0007669"/>
    <property type="project" value="UniProtKB-UniRule"/>
</dbReference>
<dbReference type="GO" id="GO:0016879">
    <property type="term" value="F:ligase activity, forming carbon-nitrogen bonds"/>
    <property type="evidence" value="ECO:0007669"/>
    <property type="project" value="UniProtKB-UniRule"/>
</dbReference>
<dbReference type="GO" id="GO:0008270">
    <property type="term" value="F:zinc ion binding"/>
    <property type="evidence" value="ECO:0007669"/>
    <property type="project" value="UniProtKB-UniRule"/>
</dbReference>
<dbReference type="GO" id="GO:0008616">
    <property type="term" value="P:queuosine biosynthetic process"/>
    <property type="evidence" value="ECO:0007669"/>
    <property type="project" value="UniProtKB-UniRule"/>
</dbReference>
<dbReference type="CDD" id="cd01995">
    <property type="entry name" value="QueC-like"/>
    <property type="match status" value="1"/>
</dbReference>
<dbReference type="Gene3D" id="3.40.50.620">
    <property type="entry name" value="HUPs"/>
    <property type="match status" value="1"/>
</dbReference>
<dbReference type="HAMAP" id="MF_01633">
    <property type="entry name" value="QueC"/>
    <property type="match status" value="1"/>
</dbReference>
<dbReference type="InterPro" id="IPR018317">
    <property type="entry name" value="QueC"/>
</dbReference>
<dbReference type="InterPro" id="IPR014729">
    <property type="entry name" value="Rossmann-like_a/b/a_fold"/>
</dbReference>
<dbReference type="NCBIfam" id="TIGR00364">
    <property type="entry name" value="7-cyano-7-deazaguanine synthase QueC"/>
    <property type="match status" value="1"/>
</dbReference>
<dbReference type="PANTHER" id="PTHR42914">
    <property type="entry name" value="7-CYANO-7-DEAZAGUANINE SYNTHASE"/>
    <property type="match status" value="1"/>
</dbReference>
<dbReference type="PANTHER" id="PTHR42914:SF1">
    <property type="entry name" value="7-CYANO-7-DEAZAGUANINE SYNTHASE"/>
    <property type="match status" value="1"/>
</dbReference>
<dbReference type="Pfam" id="PF06508">
    <property type="entry name" value="QueC"/>
    <property type="match status" value="1"/>
</dbReference>
<dbReference type="PIRSF" id="PIRSF006293">
    <property type="entry name" value="ExsB"/>
    <property type="match status" value="1"/>
</dbReference>
<dbReference type="SUPFAM" id="SSF52402">
    <property type="entry name" value="Adenine nucleotide alpha hydrolases-like"/>
    <property type="match status" value="1"/>
</dbReference>
<feature type="chain" id="PRO_0000246825" description="7-cyano-7-deazaguanine synthase">
    <location>
        <begin position="1"/>
        <end position="242"/>
    </location>
</feature>
<feature type="binding site" evidence="1">
    <location>
        <begin position="13"/>
        <end position="23"/>
    </location>
    <ligand>
        <name>ATP</name>
        <dbReference type="ChEBI" id="CHEBI:30616"/>
    </ligand>
</feature>
<feature type="binding site" evidence="1">
    <location>
        <position position="201"/>
    </location>
    <ligand>
        <name>Zn(2+)</name>
        <dbReference type="ChEBI" id="CHEBI:29105"/>
    </ligand>
</feature>
<feature type="binding site" evidence="1">
    <location>
        <position position="216"/>
    </location>
    <ligand>
        <name>Zn(2+)</name>
        <dbReference type="ChEBI" id="CHEBI:29105"/>
    </ligand>
</feature>
<feature type="binding site" evidence="1">
    <location>
        <position position="219"/>
    </location>
    <ligand>
        <name>Zn(2+)</name>
        <dbReference type="ChEBI" id="CHEBI:29105"/>
    </ligand>
</feature>
<feature type="binding site" evidence="1">
    <location>
        <position position="222"/>
    </location>
    <ligand>
        <name>Zn(2+)</name>
        <dbReference type="ChEBI" id="CHEBI:29105"/>
    </ligand>
</feature>
<gene>
    <name evidence="1" type="primary">queC</name>
    <name type="ordered locus">CC_3160</name>
</gene>
<evidence type="ECO:0000255" key="1">
    <source>
        <dbReference type="HAMAP-Rule" id="MF_01633"/>
    </source>
</evidence>
<reference key="1">
    <citation type="journal article" date="2001" name="Proc. Natl. Acad. Sci. U.S.A.">
        <title>Complete genome sequence of Caulobacter crescentus.</title>
        <authorList>
            <person name="Nierman W.C."/>
            <person name="Feldblyum T.V."/>
            <person name="Laub M.T."/>
            <person name="Paulsen I.T."/>
            <person name="Nelson K.E."/>
            <person name="Eisen J.A."/>
            <person name="Heidelberg J.F."/>
            <person name="Alley M.R.K."/>
            <person name="Ohta N."/>
            <person name="Maddock J.R."/>
            <person name="Potocka I."/>
            <person name="Nelson W.C."/>
            <person name="Newton A."/>
            <person name="Stephens C."/>
            <person name="Phadke N.D."/>
            <person name="Ely B."/>
            <person name="DeBoy R.T."/>
            <person name="Dodson R.J."/>
            <person name="Durkin A.S."/>
            <person name="Gwinn M.L."/>
            <person name="Haft D.H."/>
            <person name="Kolonay J.F."/>
            <person name="Smit J."/>
            <person name="Craven M.B."/>
            <person name="Khouri H.M."/>
            <person name="Shetty J."/>
            <person name="Berry K.J."/>
            <person name="Utterback T.R."/>
            <person name="Tran K."/>
            <person name="Wolf A.M."/>
            <person name="Vamathevan J.J."/>
            <person name="Ermolaeva M.D."/>
            <person name="White O."/>
            <person name="Salzberg S.L."/>
            <person name="Venter J.C."/>
            <person name="Shapiro L."/>
            <person name="Fraser C.M."/>
        </authorList>
    </citation>
    <scope>NUCLEOTIDE SEQUENCE [LARGE SCALE GENOMIC DNA]</scope>
    <source>
        <strain>ATCC 19089 / CIP 103742 / CB 15</strain>
    </source>
</reference>
<sequence length="242" mass="26876">MSPRERQAALVLFSGGQDSSVCLAWALERYDRVETVGFDYGQRHAIEMQARQAVRREVAARFPQWAERLGEDHVLDIRSFGAVAQSALTADRAIEMTERGLPSTFVPGRNLVFLTYAAALADRRGIDALVGGMCETDFSGYPDCRRDTLDAMQAALNLGMDRNFRIETPLMWLTKAQTWGLSKQLGGEALVSLIVEESHTCYQGERGQLHAWGHGCGTCPACELREKGYVEWDMAGREALAQ</sequence>
<organism>
    <name type="scientific">Caulobacter vibrioides (strain ATCC 19089 / CIP 103742 / CB 15)</name>
    <name type="common">Caulobacter crescentus</name>
    <dbReference type="NCBI Taxonomy" id="190650"/>
    <lineage>
        <taxon>Bacteria</taxon>
        <taxon>Pseudomonadati</taxon>
        <taxon>Pseudomonadota</taxon>
        <taxon>Alphaproteobacteria</taxon>
        <taxon>Caulobacterales</taxon>
        <taxon>Caulobacteraceae</taxon>
        <taxon>Caulobacter</taxon>
    </lineage>
</organism>
<proteinExistence type="inferred from homology"/>
<accession>Q9A3P2</accession>
<keyword id="KW-0067">ATP-binding</keyword>
<keyword id="KW-0436">Ligase</keyword>
<keyword id="KW-0479">Metal-binding</keyword>
<keyword id="KW-0547">Nucleotide-binding</keyword>
<keyword id="KW-0671">Queuosine biosynthesis</keyword>
<keyword id="KW-1185">Reference proteome</keyword>
<keyword id="KW-0862">Zinc</keyword>
<name>QUEC_CAUVC</name>
<protein>
    <recommendedName>
        <fullName evidence="1">7-cyano-7-deazaguanine synthase</fullName>
        <ecNumber evidence="1">6.3.4.20</ecNumber>
    </recommendedName>
    <alternativeName>
        <fullName evidence="1">7-cyano-7-carbaguanine synthase</fullName>
    </alternativeName>
    <alternativeName>
        <fullName evidence="1">PreQ(0) synthase</fullName>
    </alternativeName>
    <alternativeName>
        <fullName evidence="1">Queuosine biosynthesis protein QueC</fullName>
    </alternativeName>
</protein>